<proteinExistence type="inferred from homology"/>
<protein>
    <recommendedName>
        <fullName evidence="1">Small ribosomal subunit protein uS4</fullName>
    </recommendedName>
    <alternativeName>
        <fullName evidence="2">30S ribosomal protein S4</fullName>
    </alternativeName>
</protein>
<comment type="function">
    <text evidence="1">One of the primary rRNA binding proteins, it binds directly to 16S rRNA where it nucleates assembly of the body of the 30S subunit.</text>
</comment>
<comment type="function">
    <text evidence="1">With S5 and S12 plays an important role in translational accuracy.</text>
</comment>
<comment type="subunit">
    <text evidence="1">Part of the 30S ribosomal subunit. Contacts protein S5. The interaction surface between S4 and S5 is involved in control of translational fidelity.</text>
</comment>
<comment type="similarity">
    <text evidence="1">Belongs to the universal ribosomal protein uS4 family.</text>
</comment>
<keyword id="KW-0687">Ribonucleoprotein</keyword>
<keyword id="KW-0689">Ribosomal protein</keyword>
<keyword id="KW-0694">RNA-binding</keyword>
<keyword id="KW-0699">rRNA-binding</keyword>
<gene>
    <name evidence="1" type="primary">rpsD</name>
    <name type="ordered locus">SpyM51805</name>
</gene>
<evidence type="ECO:0000255" key="1">
    <source>
        <dbReference type="HAMAP-Rule" id="MF_01306"/>
    </source>
</evidence>
<evidence type="ECO:0000305" key="2"/>
<dbReference type="EMBL" id="AM295007">
    <property type="protein sequence ID" value="CAM31130.1"/>
    <property type="molecule type" value="Genomic_DNA"/>
</dbReference>
<dbReference type="RefSeq" id="WP_002982092.1">
    <property type="nucleotide sequence ID" value="NC_009332.1"/>
</dbReference>
<dbReference type="SMR" id="A2RGZ8"/>
<dbReference type="GeneID" id="69901600"/>
<dbReference type="KEGG" id="spf:SpyM51805"/>
<dbReference type="HOGENOM" id="CLU_092403_0_1_9"/>
<dbReference type="GO" id="GO:0015935">
    <property type="term" value="C:small ribosomal subunit"/>
    <property type="evidence" value="ECO:0007669"/>
    <property type="project" value="InterPro"/>
</dbReference>
<dbReference type="GO" id="GO:0019843">
    <property type="term" value="F:rRNA binding"/>
    <property type="evidence" value="ECO:0007669"/>
    <property type="project" value="UniProtKB-UniRule"/>
</dbReference>
<dbReference type="GO" id="GO:0003735">
    <property type="term" value="F:structural constituent of ribosome"/>
    <property type="evidence" value="ECO:0007669"/>
    <property type="project" value="InterPro"/>
</dbReference>
<dbReference type="GO" id="GO:0042274">
    <property type="term" value="P:ribosomal small subunit biogenesis"/>
    <property type="evidence" value="ECO:0007669"/>
    <property type="project" value="TreeGrafter"/>
</dbReference>
<dbReference type="GO" id="GO:0006412">
    <property type="term" value="P:translation"/>
    <property type="evidence" value="ECO:0007669"/>
    <property type="project" value="UniProtKB-UniRule"/>
</dbReference>
<dbReference type="CDD" id="cd00165">
    <property type="entry name" value="S4"/>
    <property type="match status" value="1"/>
</dbReference>
<dbReference type="FunFam" id="1.10.1050.10:FF:000001">
    <property type="entry name" value="30S ribosomal protein S4"/>
    <property type="match status" value="1"/>
</dbReference>
<dbReference type="FunFam" id="3.10.290.10:FF:000001">
    <property type="entry name" value="30S ribosomal protein S4"/>
    <property type="match status" value="1"/>
</dbReference>
<dbReference type="Gene3D" id="1.10.1050.10">
    <property type="entry name" value="Ribosomal Protein S4 Delta 41, Chain A, domain 1"/>
    <property type="match status" value="1"/>
</dbReference>
<dbReference type="Gene3D" id="3.10.290.10">
    <property type="entry name" value="RNA-binding S4 domain"/>
    <property type="match status" value="1"/>
</dbReference>
<dbReference type="HAMAP" id="MF_01306_B">
    <property type="entry name" value="Ribosomal_uS4_B"/>
    <property type="match status" value="1"/>
</dbReference>
<dbReference type="InterPro" id="IPR022801">
    <property type="entry name" value="Ribosomal_uS4"/>
</dbReference>
<dbReference type="InterPro" id="IPR005709">
    <property type="entry name" value="Ribosomal_uS4_bac-type"/>
</dbReference>
<dbReference type="InterPro" id="IPR018079">
    <property type="entry name" value="Ribosomal_uS4_CS"/>
</dbReference>
<dbReference type="InterPro" id="IPR001912">
    <property type="entry name" value="Ribosomal_uS4_N"/>
</dbReference>
<dbReference type="InterPro" id="IPR002942">
    <property type="entry name" value="S4_RNA-bd"/>
</dbReference>
<dbReference type="InterPro" id="IPR036986">
    <property type="entry name" value="S4_RNA-bd_sf"/>
</dbReference>
<dbReference type="NCBIfam" id="NF003717">
    <property type="entry name" value="PRK05327.1"/>
    <property type="match status" value="1"/>
</dbReference>
<dbReference type="NCBIfam" id="TIGR01017">
    <property type="entry name" value="rpsD_bact"/>
    <property type="match status" value="1"/>
</dbReference>
<dbReference type="PANTHER" id="PTHR11831">
    <property type="entry name" value="30S 40S RIBOSOMAL PROTEIN"/>
    <property type="match status" value="1"/>
</dbReference>
<dbReference type="PANTHER" id="PTHR11831:SF4">
    <property type="entry name" value="SMALL RIBOSOMAL SUBUNIT PROTEIN US4M"/>
    <property type="match status" value="1"/>
</dbReference>
<dbReference type="Pfam" id="PF00163">
    <property type="entry name" value="Ribosomal_S4"/>
    <property type="match status" value="1"/>
</dbReference>
<dbReference type="Pfam" id="PF01479">
    <property type="entry name" value="S4"/>
    <property type="match status" value="1"/>
</dbReference>
<dbReference type="SMART" id="SM01390">
    <property type="entry name" value="Ribosomal_S4"/>
    <property type="match status" value="1"/>
</dbReference>
<dbReference type="SMART" id="SM00363">
    <property type="entry name" value="S4"/>
    <property type="match status" value="1"/>
</dbReference>
<dbReference type="SUPFAM" id="SSF55174">
    <property type="entry name" value="Alpha-L RNA-binding motif"/>
    <property type="match status" value="1"/>
</dbReference>
<dbReference type="PROSITE" id="PS00632">
    <property type="entry name" value="RIBOSOMAL_S4"/>
    <property type="match status" value="1"/>
</dbReference>
<dbReference type="PROSITE" id="PS50889">
    <property type="entry name" value="S4"/>
    <property type="match status" value="1"/>
</dbReference>
<organism>
    <name type="scientific">Streptococcus pyogenes serotype M5 (strain Manfredo)</name>
    <dbReference type="NCBI Taxonomy" id="160491"/>
    <lineage>
        <taxon>Bacteria</taxon>
        <taxon>Bacillati</taxon>
        <taxon>Bacillota</taxon>
        <taxon>Bacilli</taxon>
        <taxon>Lactobacillales</taxon>
        <taxon>Streptococcaceae</taxon>
        <taxon>Streptococcus</taxon>
    </lineage>
</organism>
<sequence length="203" mass="23123">MSRYTGPSWKQSRRLGLSLTGTGKELARRNYVPGQHGPNNRSKLSEYGLQLAEKQKLRFSYGLGEKQFRNLFVQATKIKEGTLGFNFMVLLERRLDNVVYRLGLATTRRQARQFVNHGHILVDGKRVDIPSYRVDPGQVISVREKSMKVPAILEAVEATLGRPAFVSFDAEKLEGSLTRLPERDEINPEINEALVVEFYNKML</sequence>
<feature type="chain" id="PRO_0000293382" description="Small ribosomal subunit protein uS4">
    <location>
        <begin position="1"/>
        <end position="203"/>
    </location>
</feature>
<feature type="domain" description="S4 RNA-binding" evidence="1">
    <location>
        <begin position="93"/>
        <end position="156"/>
    </location>
</feature>
<accession>A2RGZ8</accession>
<reference key="1">
    <citation type="journal article" date="2007" name="J. Bacteriol.">
        <title>Complete genome of acute rheumatic fever-associated serotype M5 Streptococcus pyogenes strain Manfredo.</title>
        <authorList>
            <person name="Holden M.T.G."/>
            <person name="Scott A."/>
            <person name="Cherevach I."/>
            <person name="Chillingworth T."/>
            <person name="Churcher C."/>
            <person name="Cronin A."/>
            <person name="Dowd L."/>
            <person name="Feltwell T."/>
            <person name="Hamlin N."/>
            <person name="Holroyd S."/>
            <person name="Jagels K."/>
            <person name="Moule S."/>
            <person name="Mungall K."/>
            <person name="Quail M.A."/>
            <person name="Price C."/>
            <person name="Rabbinowitsch E."/>
            <person name="Sharp S."/>
            <person name="Skelton J."/>
            <person name="Whitehead S."/>
            <person name="Barrell B.G."/>
            <person name="Kehoe M."/>
            <person name="Parkhill J."/>
        </authorList>
    </citation>
    <scope>NUCLEOTIDE SEQUENCE [LARGE SCALE GENOMIC DNA]</scope>
    <source>
        <strain>Manfredo</strain>
    </source>
</reference>
<name>RS4_STRPG</name>